<sequence length="896" mass="96693">MDTAEIRRRFVAHFEHNTTVGAHTPVPSASLLLDDPNLLFVNAGMVPFKPYFLGQEAPPYPRATSVQKCVRTPDIEDVGKTTRHGTFFEMCGNFSFGDYFKEGAIELAWDLVTRPLADGGWGLEESKLYPSVYEDDPEAVALWKKVTGLPEERIIRLGKRENYWSMGVPGPGGPCSEILYDRGPDYGPDGDFGPKGEDRYLEIWNLVFMQDELSAVRSKEDFDIAGSLPKKNIDTGMGLERVAFLLQGKANMYEIDVMFPVIQKAEELTGRRYGADHDDDVRFRVVADHVRSSMMLIGDGVTPGNEARGYVLRRLLRRAVRSMRLLGYEDPALPELFPISRDKMGETYTALHRDWERISTVAYAEEHAFRQTLRSGTTIFDQATAELKQAGGSQLSGDKAFALHDTYGFPIDLTLEMAAEQGLAVDEVGFRRLMNEQRQRAKDDAKAKKGQHRDASAYRQVADSLGRPVEFTGYDVVTDEASVRGLVAAGGVVSSAGPGDDVEIILDRTPFYAEGGGQLADQGVIELDNGARVEVRDVQSPVRGLIVHHATVLSGEVSIGLGAHALVDVERRRSISRSHTATHMVHKAFREALGETATQAGSENSPGRFRFDFSAVGAVPESVMADVEARVNEVVLDDLAVHAEVMSQADAVKSGAMALFGEKYGDRVRVVSVGDWARELCGGTHAGSSGKLGVVKLLGESSIGSGVRRVEALVGSDAYRFLAREHVLVAQLSDTLKVRPEQLPERVHDLVEKLREAEKEIERVRVGQLLAAAGELAAGAAKVGPVNLVAHRADGAGGGDVRTLALDVRGRLPQGEPGVVVVIGAVDGKVAVVAALNDEARARGLSANELVRAVGPLVGGKGGGKDDVAQGGGTDASRIDEAITLVTAEVGRVAAG</sequence>
<gene>
    <name evidence="1" type="primary">alaS</name>
    <name type="ordered locus">Noca_2407</name>
</gene>
<name>SYA_NOCSJ</name>
<organism>
    <name type="scientific">Nocardioides sp. (strain ATCC BAA-499 / JS614)</name>
    <dbReference type="NCBI Taxonomy" id="196162"/>
    <lineage>
        <taxon>Bacteria</taxon>
        <taxon>Bacillati</taxon>
        <taxon>Actinomycetota</taxon>
        <taxon>Actinomycetes</taxon>
        <taxon>Propionibacteriales</taxon>
        <taxon>Nocardioidaceae</taxon>
        <taxon>Nocardioides</taxon>
    </lineage>
</organism>
<accession>A1SJC7</accession>
<keyword id="KW-0030">Aminoacyl-tRNA synthetase</keyword>
<keyword id="KW-0067">ATP-binding</keyword>
<keyword id="KW-0963">Cytoplasm</keyword>
<keyword id="KW-0436">Ligase</keyword>
<keyword id="KW-0479">Metal-binding</keyword>
<keyword id="KW-0547">Nucleotide-binding</keyword>
<keyword id="KW-0648">Protein biosynthesis</keyword>
<keyword id="KW-1185">Reference proteome</keyword>
<keyword id="KW-0694">RNA-binding</keyword>
<keyword id="KW-0820">tRNA-binding</keyword>
<keyword id="KW-0862">Zinc</keyword>
<dbReference type="EC" id="6.1.1.7" evidence="1"/>
<dbReference type="EMBL" id="CP000509">
    <property type="protein sequence ID" value="ABL81912.1"/>
    <property type="molecule type" value="Genomic_DNA"/>
</dbReference>
<dbReference type="RefSeq" id="WP_011755853.1">
    <property type="nucleotide sequence ID" value="NC_008699.1"/>
</dbReference>
<dbReference type="SMR" id="A1SJC7"/>
<dbReference type="STRING" id="196162.Noca_2407"/>
<dbReference type="KEGG" id="nca:Noca_2407"/>
<dbReference type="eggNOG" id="COG0013">
    <property type="taxonomic scope" value="Bacteria"/>
</dbReference>
<dbReference type="HOGENOM" id="CLU_004485_1_1_11"/>
<dbReference type="OrthoDB" id="9803884at2"/>
<dbReference type="Proteomes" id="UP000000640">
    <property type="component" value="Chromosome"/>
</dbReference>
<dbReference type="GO" id="GO:0005829">
    <property type="term" value="C:cytosol"/>
    <property type="evidence" value="ECO:0007669"/>
    <property type="project" value="TreeGrafter"/>
</dbReference>
<dbReference type="GO" id="GO:0004813">
    <property type="term" value="F:alanine-tRNA ligase activity"/>
    <property type="evidence" value="ECO:0007669"/>
    <property type="project" value="UniProtKB-UniRule"/>
</dbReference>
<dbReference type="GO" id="GO:0002161">
    <property type="term" value="F:aminoacyl-tRNA deacylase activity"/>
    <property type="evidence" value="ECO:0007669"/>
    <property type="project" value="TreeGrafter"/>
</dbReference>
<dbReference type="GO" id="GO:0005524">
    <property type="term" value="F:ATP binding"/>
    <property type="evidence" value="ECO:0007669"/>
    <property type="project" value="UniProtKB-UniRule"/>
</dbReference>
<dbReference type="GO" id="GO:0000049">
    <property type="term" value="F:tRNA binding"/>
    <property type="evidence" value="ECO:0007669"/>
    <property type="project" value="UniProtKB-KW"/>
</dbReference>
<dbReference type="GO" id="GO:0008270">
    <property type="term" value="F:zinc ion binding"/>
    <property type="evidence" value="ECO:0007669"/>
    <property type="project" value="UniProtKB-UniRule"/>
</dbReference>
<dbReference type="GO" id="GO:0006419">
    <property type="term" value="P:alanyl-tRNA aminoacylation"/>
    <property type="evidence" value="ECO:0007669"/>
    <property type="project" value="UniProtKB-UniRule"/>
</dbReference>
<dbReference type="CDD" id="cd00673">
    <property type="entry name" value="AlaRS_core"/>
    <property type="match status" value="1"/>
</dbReference>
<dbReference type="FunFam" id="3.10.310.40:FF:000001">
    <property type="entry name" value="Alanine--tRNA ligase"/>
    <property type="match status" value="1"/>
</dbReference>
<dbReference type="FunFam" id="3.30.54.20:FF:000001">
    <property type="entry name" value="Alanine--tRNA ligase"/>
    <property type="match status" value="1"/>
</dbReference>
<dbReference type="FunFam" id="3.30.980.10:FF:000004">
    <property type="entry name" value="Alanine--tRNA ligase, cytoplasmic"/>
    <property type="match status" value="1"/>
</dbReference>
<dbReference type="Gene3D" id="2.40.30.130">
    <property type="match status" value="1"/>
</dbReference>
<dbReference type="Gene3D" id="3.10.310.40">
    <property type="match status" value="1"/>
</dbReference>
<dbReference type="Gene3D" id="3.30.54.20">
    <property type="match status" value="1"/>
</dbReference>
<dbReference type="Gene3D" id="6.10.250.550">
    <property type="match status" value="1"/>
</dbReference>
<dbReference type="Gene3D" id="3.30.930.10">
    <property type="entry name" value="Bira Bifunctional Protein, Domain 2"/>
    <property type="match status" value="1"/>
</dbReference>
<dbReference type="Gene3D" id="3.30.980.10">
    <property type="entry name" value="Threonyl-trna Synthetase, Chain A, domain 2"/>
    <property type="match status" value="1"/>
</dbReference>
<dbReference type="HAMAP" id="MF_00036_B">
    <property type="entry name" value="Ala_tRNA_synth_B"/>
    <property type="match status" value="1"/>
</dbReference>
<dbReference type="InterPro" id="IPR045864">
    <property type="entry name" value="aa-tRNA-synth_II/BPL/LPL"/>
</dbReference>
<dbReference type="InterPro" id="IPR002318">
    <property type="entry name" value="Ala-tRNA-lgiase_IIc"/>
</dbReference>
<dbReference type="InterPro" id="IPR018162">
    <property type="entry name" value="Ala-tRNA-ligase_IIc_anticod-bd"/>
</dbReference>
<dbReference type="InterPro" id="IPR018165">
    <property type="entry name" value="Ala-tRNA-synth_IIc_core"/>
</dbReference>
<dbReference type="InterPro" id="IPR018164">
    <property type="entry name" value="Ala-tRNA-synth_IIc_N"/>
</dbReference>
<dbReference type="InterPro" id="IPR050058">
    <property type="entry name" value="Ala-tRNA_ligase"/>
</dbReference>
<dbReference type="InterPro" id="IPR023033">
    <property type="entry name" value="Ala_tRNA_ligase_euk/bac"/>
</dbReference>
<dbReference type="InterPro" id="IPR003156">
    <property type="entry name" value="DHHA1_dom"/>
</dbReference>
<dbReference type="InterPro" id="IPR018163">
    <property type="entry name" value="Thr/Ala-tRNA-synth_IIc_edit"/>
</dbReference>
<dbReference type="InterPro" id="IPR009000">
    <property type="entry name" value="Transl_B-barrel_sf"/>
</dbReference>
<dbReference type="InterPro" id="IPR012947">
    <property type="entry name" value="tRNA_SAD"/>
</dbReference>
<dbReference type="NCBIfam" id="TIGR00344">
    <property type="entry name" value="alaS"/>
    <property type="match status" value="1"/>
</dbReference>
<dbReference type="PANTHER" id="PTHR11777:SF9">
    <property type="entry name" value="ALANINE--TRNA LIGASE, CYTOPLASMIC"/>
    <property type="match status" value="1"/>
</dbReference>
<dbReference type="PANTHER" id="PTHR11777">
    <property type="entry name" value="ALANYL-TRNA SYNTHETASE"/>
    <property type="match status" value="1"/>
</dbReference>
<dbReference type="Pfam" id="PF02272">
    <property type="entry name" value="DHHA1"/>
    <property type="match status" value="1"/>
</dbReference>
<dbReference type="Pfam" id="PF01411">
    <property type="entry name" value="tRNA-synt_2c"/>
    <property type="match status" value="1"/>
</dbReference>
<dbReference type="Pfam" id="PF07973">
    <property type="entry name" value="tRNA_SAD"/>
    <property type="match status" value="1"/>
</dbReference>
<dbReference type="PRINTS" id="PR00980">
    <property type="entry name" value="TRNASYNTHALA"/>
</dbReference>
<dbReference type="SMART" id="SM00863">
    <property type="entry name" value="tRNA_SAD"/>
    <property type="match status" value="1"/>
</dbReference>
<dbReference type="SUPFAM" id="SSF55681">
    <property type="entry name" value="Class II aaRS and biotin synthetases"/>
    <property type="match status" value="1"/>
</dbReference>
<dbReference type="SUPFAM" id="SSF101353">
    <property type="entry name" value="Putative anticodon-binding domain of alanyl-tRNA synthetase (AlaRS)"/>
    <property type="match status" value="1"/>
</dbReference>
<dbReference type="SUPFAM" id="SSF55186">
    <property type="entry name" value="ThrRS/AlaRS common domain"/>
    <property type="match status" value="1"/>
</dbReference>
<dbReference type="SUPFAM" id="SSF50447">
    <property type="entry name" value="Translation proteins"/>
    <property type="match status" value="1"/>
</dbReference>
<dbReference type="PROSITE" id="PS50860">
    <property type="entry name" value="AA_TRNA_LIGASE_II_ALA"/>
    <property type="match status" value="1"/>
</dbReference>
<feature type="chain" id="PRO_0000347703" description="Alanine--tRNA ligase">
    <location>
        <begin position="1"/>
        <end position="896"/>
    </location>
</feature>
<feature type="region of interest" description="Disordered" evidence="2">
    <location>
        <begin position="439"/>
        <end position="459"/>
    </location>
</feature>
<feature type="compositionally biased region" description="Basic and acidic residues" evidence="2">
    <location>
        <begin position="439"/>
        <end position="456"/>
    </location>
</feature>
<feature type="binding site" evidence="1">
    <location>
        <position position="579"/>
    </location>
    <ligand>
        <name>Zn(2+)</name>
        <dbReference type="ChEBI" id="CHEBI:29105"/>
    </ligand>
</feature>
<feature type="binding site" evidence="1">
    <location>
        <position position="583"/>
    </location>
    <ligand>
        <name>Zn(2+)</name>
        <dbReference type="ChEBI" id="CHEBI:29105"/>
    </ligand>
</feature>
<feature type="binding site" evidence="1">
    <location>
        <position position="681"/>
    </location>
    <ligand>
        <name>Zn(2+)</name>
        <dbReference type="ChEBI" id="CHEBI:29105"/>
    </ligand>
</feature>
<feature type="binding site" evidence="1">
    <location>
        <position position="685"/>
    </location>
    <ligand>
        <name>Zn(2+)</name>
        <dbReference type="ChEBI" id="CHEBI:29105"/>
    </ligand>
</feature>
<reference key="1">
    <citation type="submission" date="2006-12" db="EMBL/GenBank/DDBJ databases">
        <title>Complete sequence of chromosome 1 of Nocardioides sp. JS614.</title>
        <authorList>
            <person name="Copeland A."/>
            <person name="Lucas S."/>
            <person name="Lapidus A."/>
            <person name="Barry K."/>
            <person name="Detter J.C."/>
            <person name="Glavina del Rio T."/>
            <person name="Hammon N."/>
            <person name="Israni S."/>
            <person name="Dalin E."/>
            <person name="Tice H."/>
            <person name="Pitluck S."/>
            <person name="Thompson L.S."/>
            <person name="Brettin T."/>
            <person name="Bruce D."/>
            <person name="Han C."/>
            <person name="Tapia R."/>
            <person name="Schmutz J."/>
            <person name="Larimer F."/>
            <person name="Land M."/>
            <person name="Hauser L."/>
            <person name="Kyrpides N."/>
            <person name="Kim E."/>
            <person name="Mattes T."/>
            <person name="Gossett J."/>
            <person name="Richardson P."/>
        </authorList>
    </citation>
    <scope>NUCLEOTIDE SEQUENCE [LARGE SCALE GENOMIC DNA]</scope>
    <source>
        <strain>ATCC BAA-499 / JS614</strain>
    </source>
</reference>
<evidence type="ECO:0000255" key="1">
    <source>
        <dbReference type="HAMAP-Rule" id="MF_00036"/>
    </source>
</evidence>
<evidence type="ECO:0000256" key="2">
    <source>
        <dbReference type="SAM" id="MobiDB-lite"/>
    </source>
</evidence>
<proteinExistence type="inferred from homology"/>
<comment type="function">
    <text evidence="1">Catalyzes the attachment of alanine to tRNA(Ala) in a two-step reaction: alanine is first activated by ATP to form Ala-AMP and then transferred to the acceptor end of tRNA(Ala). Also edits incorrectly charged Ser-tRNA(Ala) and Gly-tRNA(Ala) via its editing domain.</text>
</comment>
<comment type="catalytic activity">
    <reaction evidence="1">
        <text>tRNA(Ala) + L-alanine + ATP = L-alanyl-tRNA(Ala) + AMP + diphosphate</text>
        <dbReference type="Rhea" id="RHEA:12540"/>
        <dbReference type="Rhea" id="RHEA-COMP:9657"/>
        <dbReference type="Rhea" id="RHEA-COMP:9923"/>
        <dbReference type="ChEBI" id="CHEBI:30616"/>
        <dbReference type="ChEBI" id="CHEBI:33019"/>
        <dbReference type="ChEBI" id="CHEBI:57972"/>
        <dbReference type="ChEBI" id="CHEBI:78442"/>
        <dbReference type="ChEBI" id="CHEBI:78497"/>
        <dbReference type="ChEBI" id="CHEBI:456215"/>
        <dbReference type="EC" id="6.1.1.7"/>
    </reaction>
</comment>
<comment type="cofactor">
    <cofactor evidence="1">
        <name>Zn(2+)</name>
        <dbReference type="ChEBI" id="CHEBI:29105"/>
    </cofactor>
    <text evidence="1">Binds 1 zinc ion per subunit.</text>
</comment>
<comment type="subcellular location">
    <subcellularLocation>
        <location evidence="1">Cytoplasm</location>
    </subcellularLocation>
</comment>
<comment type="domain">
    <text evidence="1">Consists of three domains; the N-terminal catalytic domain, the editing domain and the C-terminal C-Ala domain. The editing domain removes incorrectly charged amino acids, while the C-Ala domain, along with tRNA(Ala), serves as a bridge to cooperatively bring together the editing and aminoacylation centers thus stimulating deacylation of misacylated tRNAs.</text>
</comment>
<comment type="similarity">
    <text evidence="1">Belongs to the class-II aminoacyl-tRNA synthetase family.</text>
</comment>
<protein>
    <recommendedName>
        <fullName evidence="1">Alanine--tRNA ligase</fullName>
        <ecNumber evidence="1">6.1.1.7</ecNumber>
    </recommendedName>
    <alternativeName>
        <fullName evidence="1">Alanyl-tRNA synthetase</fullName>
        <shortName evidence="1">AlaRS</shortName>
    </alternativeName>
</protein>